<evidence type="ECO:0000255" key="1">
    <source>
        <dbReference type="HAMAP-Rule" id="MF_01723"/>
    </source>
</evidence>
<sequence>MLKLENLTYRYEHLMMRFDLHIQAGERIAILGPSGAGKSTLLNLIAGFQTAEKGSLWLNGENHTSTSPAQRPVSMLFQENNLFSHLTIEQNIGLGLHPGLRLNSTQKQTLQQIVSQVSLEDCLPRLPAQLSGGQRQRAALARCLVRQQPILLLDEPFSALDPALRNEMLVLLEQVCHERQLTLLMVSHNLDDAARIADRALLIVDGNIHYDGLTNTLVAGTVPEAAILGMKTDAI</sequence>
<reference key="1">
    <citation type="journal article" date="2003" name="Nat. Biotechnol.">
        <title>The genome sequence of the entomopathogenic bacterium Photorhabdus luminescens.</title>
        <authorList>
            <person name="Duchaud E."/>
            <person name="Rusniok C."/>
            <person name="Frangeul L."/>
            <person name="Buchrieser C."/>
            <person name="Givaudan A."/>
            <person name="Taourit S."/>
            <person name="Bocs S."/>
            <person name="Boursaux-Eude C."/>
            <person name="Chandler M."/>
            <person name="Charles J.-F."/>
            <person name="Dassa E."/>
            <person name="Derose R."/>
            <person name="Derzelle S."/>
            <person name="Freyssinet G."/>
            <person name="Gaudriault S."/>
            <person name="Medigue C."/>
            <person name="Lanois A."/>
            <person name="Powell K."/>
            <person name="Siguier P."/>
            <person name="Vincent R."/>
            <person name="Wingate V."/>
            <person name="Zouine M."/>
            <person name="Glaser P."/>
            <person name="Boemare N."/>
            <person name="Danchin A."/>
            <person name="Kunst F."/>
        </authorList>
    </citation>
    <scope>NUCLEOTIDE SEQUENCE [LARGE SCALE GENOMIC DNA]</scope>
    <source>
        <strain>DSM 15139 / CIP 105565 / TT01</strain>
    </source>
</reference>
<name>THIQ_PHOLL</name>
<dbReference type="EC" id="7.6.2.15" evidence="1"/>
<dbReference type="EMBL" id="BX571861">
    <property type="protein sequence ID" value="CAE12912.1"/>
    <property type="molecule type" value="Genomic_DNA"/>
</dbReference>
<dbReference type="RefSeq" id="WP_011144993.1">
    <property type="nucleotide sequence ID" value="NC_005126.1"/>
</dbReference>
<dbReference type="SMR" id="Q7N8V0"/>
<dbReference type="STRING" id="243265.plu0617"/>
<dbReference type="GeneID" id="48846903"/>
<dbReference type="KEGG" id="plu:plu0617"/>
<dbReference type="eggNOG" id="COG3840">
    <property type="taxonomic scope" value="Bacteria"/>
</dbReference>
<dbReference type="HOGENOM" id="CLU_000604_1_22_6"/>
<dbReference type="OrthoDB" id="9802264at2"/>
<dbReference type="Proteomes" id="UP000002514">
    <property type="component" value="Chromosome"/>
</dbReference>
<dbReference type="GO" id="GO:0005886">
    <property type="term" value="C:plasma membrane"/>
    <property type="evidence" value="ECO:0007669"/>
    <property type="project" value="UniProtKB-SubCell"/>
</dbReference>
<dbReference type="GO" id="GO:0048502">
    <property type="term" value="F:ABC-type thiamine transporter activity"/>
    <property type="evidence" value="ECO:0007669"/>
    <property type="project" value="UniProtKB-EC"/>
</dbReference>
<dbReference type="GO" id="GO:0005524">
    <property type="term" value="F:ATP binding"/>
    <property type="evidence" value="ECO:0007669"/>
    <property type="project" value="UniProtKB-KW"/>
</dbReference>
<dbReference type="GO" id="GO:0016887">
    <property type="term" value="F:ATP hydrolysis activity"/>
    <property type="evidence" value="ECO:0007669"/>
    <property type="project" value="InterPro"/>
</dbReference>
<dbReference type="FunFam" id="3.40.50.300:FF:001071">
    <property type="entry name" value="Thiamine import ATP-binding protein ThiQ"/>
    <property type="match status" value="1"/>
</dbReference>
<dbReference type="Gene3D" id="3.40.50.300">
    <property type="entry name" value="P-loop containing nucleotide triphosphate hydrolases"/>
    <property type="match status" value="1"/>
</dbReference>
<dbReference type="InterPro" id="IPR003593">
    <property type="entry name" value="AAA+_ATPase"/>
</dbReference>
<dbReference type="InterPro" id="IPR050093">
    <property type="entry name" value="ABC_SmlMolc_Importer"/>
</dbReference>
<dbReference type="InterPro" id="IPR003439">
    <property type="entry name" value="ABC_transporter-like_ATP-bd"/>
</dbReference>
<dbReference type="InterPro" id="IPR017871">
    <property type="entry name" value="ABC_transporter-like_CS"/>
</dbReference>
<dbReference type="InterPro" id="IPR027417">
    <property type="entry name" value="P-loop_NTPase"/>
</dbReference>
<dbReference type="InterPro" id="IPR005968">
    <property type="entry name" value="Thiamine_ABC_ThiQ"/>
</dbReference>
<dbReference type="NCBIfam" id="NF008039">
    <property type="entry name" value="PRK10771.1"/>
    <property type="match status" value="1"/>
</dbReference>
<dbReference type="NCBIfam" id="TIGR01277">
    <property type="entry name" value="thiQ"/>
    <property type="match status" value="1"/>
</dbReference>
<dbReference type="PANTHER" id="PTHR42781">
    <property type="entry name" value="SPERMIDINE/PUTRESCINE IMPORT ATP-BINDING PROTEIN POTA"/>
    <property type="match status" value="1"/>
</dbReference>
<dbReference type="PANTHER" id="PTHR42781:SF1">
    <property type="entry name" value="THIAMINE IMPORT ATP-BINDING PROTEIN THIQ"/>
    <property type="match status" value="1"/>
</dbReference>
<dbReference type="Pfam" id="PF00005">
    <property type="entry name" value="ABC_tran"/>
    <property type="match status" value="1"/>
</dbReference>
<dbReference type="SMART" id="SM00382">
    <property type="entry name" value="AAA"/>
    <property type="match status" value="1"/>
</dbReference>
<dbReference type="SUPFAM" id="SSF52540">
    <property type="entry name" value="P-loop containing nucleoside triphosphate hydrolases"/>
    <property type="match status" value="1"/>
</dbReference>
<dbReference type="PROSITE" id="PS00211">
    <property type="entry name" value="ABC_TRANSPORTER_1"/>
    <property type="match status" value="1"/>
</dbReference>
<dbReference type="PROSITE" id="PS50893">
    <property type="entry name" value="ABC_TRANSPORTER_2"/>
    <property type="match status" value="1"/>
</dbReference>
<dbReference type="PROSITE" id="PS51288">
    <property type="entry name" value="THIQ"/>
    <property type="match status" value="1"/>
</dbReference>
<proteinExistence type="inferred from homology"/>
<accession>Q7N8V0</accession>
<keyword id="KW-0067">ATP-binding</keyword>
<keyword id="KW-0997">Cell inner membrane</keyword>
<keyword id="KW-1003">Cell membrane</keyword>
<keyword id="KW-0472">Membrane</keyword>
<keyword id="KW-0547">Nucleotide-binding</keyword>
<keyword id="KW-1185">Reference proteome</keyword>
<keyword id="KW-1278">Translocase</keyword>
<keyword id="KW-0813">Transport</keyword>
<organism>
    <name type="scientific">Photorhabdus laumondii subsp. laumondii (strain DSM 15139 / CIP 105565 / TT01)</name>
    <name type="common">Photorhabdus luminescens subsp. laumondii</name>
    <dbReference type="NCBI Taxonomy" id="243265"/>
    <lineage>
        <taxon>Bacteria</taxon>
        <taxon>Pseudomonadati</taxon>
        <taxon>Pseudomonadota</taxon>
        <taxon>Gammaproteobacteria</taxon>
        <taxon>Enterobacterales</taxon>
        <taxon>Morganellaceae</taxon>
        <taxon>Photorhabdus</taxon>
    </lineage>
</organism>
<comment type="function">
    <text evidence="1">Part of the ABC transporter complex ThiBPQ involved in thiamine import. Responsible for energy coupling to the transport system.</text>
</comment>
<comment type="catalytic activity">
    <reaction evidence="1">
        <text>thiamine(out) + ATP + H2O = thiamine(in) + ADP + phosphate + H(+)</text>
        <dbReference type="Rhea" id="RHEA:29811"/>
        <dbReference type="ChEBI" id="CHEBI:15377"/>
        <dbReference type="ChEBI" id="CHEBI:15378"/>
        <dbReference type="ChEBI" id="CHEBI:18385"/>
        <dbReference type="ChEBI" id="CHEBI:30616"/>
        <dbReference type="ChEBI" id="CHEBI:43474"/>
        <dbReference type="ChEBI" id="CHEBI:456216"/>
        <dbReference type="EC" id="7.6.2.15"/>
    </reaction>
</comment>
<comment type="subunit">
    <text evidence="1">The complex is composed of two ATP-binding proteins (ThiQ), two transmembrane proteins (ThiP) and a solute-binding protein (ThiB).</text>
</comment>
<comment type="subcellular location">
    <subcellularLocation>
        <location evidence="1">Cell inner membrane</location>
        <topology evidence="1">Peripheral membrane protein</topology>
    </subcellularLocation>
</comment>
<comment type="similarity">
    <text evidence="1">Belongs to the ABC transporter superfamily. Thiamine importer (TC 3.A.1.19.1) family.</text>
</comment>
<gene>
    <name evidence="1" type="primary">thiQ</name>
    <name type="ordered locus">plu0617</name>
</gene>
<feature type="chain" id="PRO_0000274450" description="Thiamine import ATP-binding protein ThiQ">
    <location>
        <begin position="1"/>
        <end position="235"/>
    </location>
</feature>
<feature type="domain" description="ABC transporter" evidence="1">
    <location>
        <begin position="2"/>
        <end position="230"/>
    </location>
</feature>
<feature type="binding site" evidence="1">
    <location>
        <begin position="32"/>
        <end position="39"/>
    </location>
    <ligand>
        <name>ATP</name>
        <dbReference type="ChEBI" id="CHEBI:30616"/>
    </ligand>
</feature>
<protein>
    <recommendedName>
        <fullName evidence="1">Thiamine import ATP-binding protein ThiQ</fullName>
        <ecNumber evidence="1">7.6.2.15</ecNumber>
    </recommendedName>
</protein>